<keyword id="KW-0067">ATP-binding</keyword>
<keyword id="KW-0156">Chromatin regulator</keyword>
<keyword id="KW-0175">Coiled coil</keyword>
<keyword id="KW-0238">DNA-binding</keyword>
<keyword id="KW-0347">Helicase</keyword>
<keyword id="KW-0378">Hydrolase</keyword>
<keyword id="KW-0477">Merozoite</keyword>
<keyword id="KW-0547">Nucleotide-binding</keyword>
<keyword id="KW-0539">Nucleus</keyword>
<keyword id="KW-1185">Reference proteome</keyword>
<keyword id="KW-0804">Transcription</keyword>
<keyword id="KW-0805">Transcription regulation</keyword>
<dbReference type="EC" id="3.6.4.-"/>
<dbReference type="EMBL" id="AL844507">
    <property type="protein sequence ID" value="CAX64141.1"/>
    <property type="molecule type" value="Genomic_DNA"/>
</dbReference>
<dbReference type="RefSeq" id="XP_002808863.1">
    <property type="nucleotide sequence ID" value="XM_002808817.1"/>
</dbReference>
<dbReference type="SMR" id="C0H4W3"/>
<dbReference type="BioGRID" id="1210343">
    <property type="interactions" value="7"/>
</dbReference>
<dbReference type="FunCoup" id="C0H4W3">
    <property type="interactions" value="122"/>
</dbReference>
<dbReference type="STRING" id="36329.C0H4W3"/>
<dbReference type="PaxDb" id="5833-PF08_0048"/>
<dbReference type="EnsemblProtists" id="CAX64141">
    <property type="protein sequence ID" value="CAX64141"/>
    <property type="gene ID" value="PF3D7_0820000"/>
</dbReference>
<dbReference type="KEGG" id="pfa:PF3D7_0820000"/>
<dbReference type="VEuPathDB" id="PlasmoDB:PF3D7_0820000"/>
<dbReference type="HOGENOM" id="CLU_001568_0_0_1"/>
<dbReference type="InParanoid" id="C0H4W3"/>
<dbReference type="OMA" id="ELYDNNH"/>
<dbReference type="OrthoDB" id="448448at2759"/>
<dbReference type="PhylomeDB" id="C0H4W3"/>
<dbReference type="Proteomes" id="UP000001450">
    <property type="component" value="Chromosome 8"/>
</dbReference>
<dbReference type="GO" id="GO:0005737">
    <property type="term" value="C:cytoplasm"/>
    <property type="evidence" value="ECO:0000303"/>
    <property type="project" value="UniProtKB"/>
</dbReference>
<dbReference type="GO" id="GO:0016020">
    <property type="term" value="C:membrane"/>
    <property type="evidence" value="ECO:0000303"/>
    <property type="project" value="UniProtKB"/>
</dbReference>
<dbReference type="GO" id="GO:0000812">
    <property type="term" value="C:Swr1 complex"/>
    <property type="evidence" value="ECO:0000318"/>
    <property type="project" value="GO_Central"/>
</dbReference>
<dbReference type="GO" id="GO:0005524">
    <property type="term" value="F:ATP binding"/>
    <property type="evidence" value="ECO:0000250"/>
    <property type="project" value="GeneDB"/>
</dbReference>
<dbReference type="GO" id="GO:0016887">
    <property type="term" value="F:ATP hydrolysis activity"/>
    <property type="evidence" value="ECO:0000318"/>
    <property type="project" value="GO_Central"/>
</dbReference>
<dbReference type="GO" id="GO:0003677">
    <property type="term" value="F:DNA binding"/>
    <property type="evidence" value="ECO:0007669"/>
    <property type="project" value="UniProtKB-KW"/>
</dbReference>
<dbReference type="GO" id="GO:0004386">
    <property type="term" value="F:helicase activity"/>
    <property type="evidence" value="ECO:0000250"/>
    <property type="project" value="GeneDB"/>
</dbReference>
<dbReference type="GO" id="GO:0042393">
    <property type="term" value="F:histone binding"/>
    <property type="evidence" value="ECO:0000318"/>
    <property type="project" value="GO_Central"/>
</dbReference>
<dbReference type="GO" id="GO:0006338">
    <property type="term" value="P:chromatin remodeling"/>
    <property type="evidence" value="ECO:0000318"/>
    <property type="project" value="GO_Central"/>
</dbReference>
<dbReference type="CDD" id="cd18003">
    <property type="entry name" value="DEXQc_SRCAP"/>
    <property type="match status" value="1"/>
</dbReference>
<dbReference type="CDD" id="cd18793">
    <property type="entry name" value="SF2_C_SNF"/>
    <property type="match status" value="1"/>
</dbReference>
<dbReference type="FunFam" id="3.40.50.300:FF:001629">
    <property type="entry name" value="Probable ATP-dependent helicase PF08_0048"/>
    <property type="match status" value="1"/>
</dbReference>
<dbReference type="FunFam" id="3.40.50.10810:FF:000050">
    <property type="entry name" value="Snf2-related CBP activator"/>
    <property type="match status" value="1"/>
</dbReference>
<dbReference type="FunFam" id="3.40.50.300:FF:001553">
    <property type="entry name" value="Snf2-related CBP activator"/>
    <property type="match status" value="1"/>
</dbReference>
<dbReference type="Gene3D" id="3.40.50.300">
    <property type="entry name" value="P-loop containing nucleotide triphosphate hydrolases"/>
    <property type="match status" value="2"/>
</dbReference>
<dbReference type="Gene3D" id="3.40.50.10810">
    <property type="entry name" value="Tandem AAA-ATPase domain"/>
    <property type="match status" value="1"/>
</dbReference>
<dbReference type="InterPro" id="IPR014001">
    <property type="entry name" value="Helicase_ATP-bd"/>
</dbReference>
<dbReference type="InterPro" id="IPR001650">
    <property type="entry name" value="Helicase_C-like"/>
</dbReference>
<dbReference type="InterPro" id="IPR014012">
    <property type="entry name" value="HSA_dom"/>
</dbReference>
<dbReference type="InterPro" id="IPR050520">
    <property type="entry name" value="INO80/SWR1_helicase"/>
</dbReference>
<dbReference type="InterPro" id="IPR027417">
    <property type="entry name" value="P-loop_NTPase"/>
</dbReference>
<dbReference type="InterPro" id="IPR038718">
    <property type="entry name" value="SNF2-like_sf"/>
</dbReference>
<dbReference type="InterPro" id="IPR049730">
    <property type="entry name" value="SNF2/RAD54-like_C"/>
</dbReference>
<dbReference type="InterPro" id="IPR000330">
    <property type="entry name" value="SNF2_N"/>
</dbReference>
<dbReference type="PANTHER" id="PTHR45685:SF1">
    <property type="entry name" value="HELICASE SRCAP"/>
    <property type="match status" value="1"/>
</dbReference>
<dbReference type="PANTHER" id="PTHR45685">
    <property type="entry name" value="HELICASE SRCAP-RELATED"/>
    <property type="match status" value="1"/>
</dbReference>
<dbReference type="Pfam" id="PF00271">
    <property type="entry name" value="Helicase_C"/>
    <property type="match status" value="1"/>
</dbReference>
<dbReference type="Pfam" id="PF07529">
    <property type="entry name" value="HSA"/>
    <property type="match status" value="1"/>
</dbReference>
<dbReference type="Pfam" id="PF00176">
    <property type="entry name" value="SNF2-rel_dom"/>
    <property type="match status" value="1"/>
</dbReference>
<dbReference type="SMART" id="SM00487">
    <property type="entry name" value="DEXDc"/>
    <property type="match status" value="1"/>
</dbReference>
<dbReference type="SMART" id="SM00490">
    <property type="entry name" value="HELICc"/>
    <property type="match status" value="1"/>
</dbReference>
<dbReference type="SUPFAM" id="SSF52540">
    <property type="entry name" value="P-loop containing nucleoside triphosphate hydrolases"/>
    <property type="match status" value="3"/>
</dbReference>
<dbReference type="PROSITE" id="PS51192">
    <property type="entry name" value="HELICASE_ATP_BIND_1"/>
    <property type="match status" value="1"/>
</dbReference>
<dbReference type="PROSITE" id="PS51194">
    <property type="entry name" value="HELICASE_CTER"/>
    <property type="match status" value="1"/>
</dbReference>
<dbReference type="PROSITE" id="PS51204">
    <property type="entry name" value="HSA"/>
    <property type="match status" value="1"/>
</dbReference>
<proteinExistence type="evidence at protein level"/>
<reference key="1">
    <citation type="journal article" date="2002" name="Nature">
        <title>Genome sequence of the human malaria parasite Plasmodium falciparum.</title>
        <authorList>
            <person name="Gardner M.J."/>
            <person name="Hall N."/>
            <person name="Fung E."/>
            <person name="White O."/>
            <person name="Berriman M."/>
            <person name="Hyman R.W."/>
            <person name="Carlton J.M."/>
            <person name="Pain A."/>
            <person name="Nelson K.E."/>
            <person name="Bowman S."/>
            <person name="Paulsen I.T."/>
            <person name="James K.D."/>
            <person name="Eisen J.A."/>
            <person name="Rutherford K.M."/>
            <person name="Salzberg S.L."/>
            <person name="Craig A."/>
            <person name="Kyes S."/>
            <person name="Chan M.-S."/>
            <person name="Nene V."/>
            <person name="Shallom S.J."/>
            <person name="Suh B."/>
            <person name="Peterson J."/>
            <person name="Angiuoli S."/>
            <person name="Pertea M."/>
            <person name="Allen J."/>
            <person name="Selengut J."/>
            <person name="Haft D."/>
            <person name="Mather M.W."/>
            <person name="Vaidya A.B."/>
            <person name="Martin D.M.A."/>
            <person name="Fairlamb A.H."/>
            <person name="Fraunholz M.J."/>
            <person name="Roos D.S."/>
            <person name="Ralph S.A."/>
            <person name="McFadden G.I."/>
            <person name="Cummings L.M."/>
            <person name="Subramanian G.M."/>
            <person name="Mungall C."/>
            <person name="Venter J.C."/>
            <person name="Carucci D.J."/>
            <person name="Hoffman S.L."/>
            <person name="Newbold C."/>
            <person name="Davis R.W."/>
            <person name="Fraser C.M."/>
            <person name="Barrell B.G."/>
        </authorList>
    </citation>
    <scope>NUCLEOTIDE SEQUENCE [LARGE SCALE GENOMIC DNA]</scope>
    <source>
        <strain>3D7</strain>
    </source>
</reference>
<reference key="2">
    <citation type="journal article" date="2002" name="Nature">
        <title>Sequence of Plasmodium falciparum chromosomes 1, 3-9 and 13.</title>
        <authorList>
            <person name="Hall N."/>
            <person name="Pain A."/>
            <person name="Berriman M."/>
            <person name="Churcher C.M."/>
            <person name="Harris B."/>
            <person name="Harris D."/>
            <person name="Mungall K.L."/>
            <person name="Bowman S."/>
            <person name="Atkin R."/>
            <person name="Baker S."/>
            <person name="Barron A."/>
            <person name="Brooks K."/>
            <person name="Buckee C.O."/>
            <person name="Burrows C."/>
            <person name="Cherevach I."/>
            <person name="Chillingworth C."/>
            <person name="Chillingworth T."/>
            <person name="Christodoulou Z."/>
            <person name="Clark L."/>
            <person name="Clark R."/>
            <person name="Corton C."/>
            <person name="Cronin A."/>
            <person name="Davies R.M."/>
            <person name="Davis P."/>
            <person name="Dear P."/>
            <person name="Dearden F."/>
            <person name="Doggett J."/>
            <person name="Feltwell T."/>
            <person name="Goble A."/>
            <person name="Goodhead I."/>
            <person name="Gwilliam R."/>
            <person name="Hamlin N."/>
            <person name="Hance Z."/>
            <person name="Harper D."/>
            <person name="Hauser H."/>
            <person name="Hornsby T."/>
            <person name="Holroyd S."/>
            <person name="Horrocks P."/>
            <person name="Humphray S."/>
            <person name="Jagels K."/>
            <person name="James K.D."/>
            <person name="Johnson D."/>
            <person name="Kerhornou A."/>
            <person name="Knights A."/>
            <person name="Konfortov B."/>
            <person name="Kyes S."/>
            <person name="Larke N."/>
            <person name="Lawson D."/>
            <person name="Lennard N."/>
            <person name="Line A."/>
            <person name="Maddison M."/>
            <person name="Mclean J."/>
            <person name="Mooney P."/>
            <person name="Moule S."/>
            <person name="Murphy L."/>
            <person name="Oliver K."/>
            <person name="Ormond D."/>
            <person name="Price C."/>
            <person name="Quail M.A."/>
            <person name="Rabbinowitsch E."/>
            <person name="Rajandream M.A."/>
            <person name="Rutter S."/>
            <person name="Rutherford K.M."/>
            <person name="Sanders M."/>
            <person name="Simmonds M."/>
            <person name="Seeger K."/>
            <person name="Sharp S."/>
            <person name="Smith R."/>
            <person name="Squares R."/>
            <person name="Squares S."/>
            <person name="Stevens K."/>
            <person name="Taylor K."/>
            <person name="Tivey A."/>
            <person name="Unwin L."/>
            <person name="Whitehead S."/>
            <person name="Woodward J.R."/>
            <person name="Sulston J.E."/>
            <person name="Craig A."/>
            <person name="Newbold C."/>
            <person name="Barrell B.G."/>
        </authorList>
    </citation>
    <scope>NUCLEOTIDE SEQUENCE [LARGE SCALE GENOMIC DNA]</scope>
    <source>
        <strain>3D7</strain>
    </source>
</reference>
<reference evidence="8" key="3">
    <citation type="journal article" date="2007" name="PLoS ONE">
        <title>Rapid identification of malaria vaccine candidates based on alpha-helical coiled coil protein motif.</title>
        <authorList>
            <person name="Villard V."/>
            <person name="Agak G.W."/>
            <person name="Frank G."/>
            <person name="Jafarshad A."/>
            <person name="Servis C."/>
            <person name="Nebie I."/>
            <person name="Sirima S.B."/>
            <person name="Felger I."/>
            <person name="Arevalo-Herrera M."/>
            <person name="Herrera S."/>
            <person name="Heitz F."/>
            <person name="Baecker V."/>
            <person name="Druilhe P."/>
            <person name="Kajava A.V."/>
            <person name="Corradin G."/>
        </authorList>
    </citation>
    <scope>SYNTHESIS OF 284-312</scope>
    <scope>POSSIBLE CANDIDATE MALARIA EPITOPE</scope>
</reference>
<sequence>MNEIKSESLLQTRPFKLGIEDIQNLGSSYFIENNEKLKKYNNEISSLKKELDILNEKMGKCTTTTKIVEPAKTPEFTFWYYELKEMKGFQDLVMYEVKKKKKHFKVLSHSCLKYLSNREKMKIKKQEEEEKRLKLYSKNISSYMDVFWKKIEKLVWEEKKRELQQTLNKKKEMRFKKFVKEAIKKIKDARHNNAHELFENKYVSMSSNNNSEIVNNNASSVDNGDKELKEDDLTDQEEEDYLLDEQMSSTDESENKEEEINMLDDEANLPIEELLKRMYGFKSGEDYINFMENEDDANEENVIETSHNDEKSGDNSIGEDDNNNDEKGGDNNIDEDDNNNDEKSGDNSIGEDDNNNDHKSGDNNIDEDDNNNDHKSEDNSIGEDDNNNDEKGGDNNIDENDNNSDHKSEDNNIDENDNNSDHQSDQEQFNHETKDDIIKNSSYEHIDNKNYYNKTGEDYKSDKENYSPTRFHNKLKKEKYDEYDTKLKIEKREEENKNYEKDEHEYESDNYDKEKINKKKELILLKNDIENDSDETSEHIKRDSRSSCQKQNCEKKRRIIKDEYNLRRTKIAKSKPSSDNNNSENDNNNDNNNDNNNDNNDDNNDDNNDDNNDDNNDDNNDDNNDDNNNEHKNDSDDNDDILTCNMDEKHLTKIPPIIKATLRDYQHAGLHWLLYLYKNNINGILADEMGLGKTLQCISLLSYLAYYFNIWGPHLVIVPTSILINWEIELKRFCPCFKILSYYGNQNERYKKRVGWFNKDSFHICISSYSTVVKDHLVFKRKRWKYIILDEAHNIKNFNTKRWNIILSLKRDNCLLITGTPLQNSLEELWSLLHFLMPNIFTSHLDFKEWFSDPLNLAIEKSKIHHSKELIDRLHTVIRPYILRRLKKNVEKEMPNKYEHIIKCKLTRRQQILYDEFINNKNVQNTLNTGNYIGLMNILIQLRKVCNHCDLFTNKYIQTPYYYMLSIRYFVPRFFILFEKNYYADFYLILFLHNEFTSLGGRDVTKETSPSSKSFDLAHILTKHNTNELYDNNHISELYDNNHISELYDNNHISELYDNNHISELYDNPMSHKNYKHNSNGYTYPNDPINNMNNNPSGFTKTSEQFGQIVSHERDNNYHMMDHNNMNNLLSKEMVNSLRNDDNSNNNFYKYSLTSNNNDSQTSIHDNKQCDYNKLCADTFNNINSIGNEEKRSLNVLNEQNNNNSKDNNNNIDNNNNIDNNNNIDNNNNIDNNNNIDNNNNNIDNNNNIDNHHNNNQHCNYNDNWPSDYPTNIINHRNAFLSILKLLNQSNPLNNDNNNNNNNNNGNNNIYNMNRYNSRNSRNSSLSNIFSSNTSKMNSFQLDFLYTNSFINQDALCKNSFFVNINIEDVHSYIYNSIYKEYIPKNILSFSDEFLTELNNNYDILSLYIDPYNRYKSYNEYLYKMKEEGTLTNQQSLGDINNKHIYHKSTSNENTHMKNRKTFIYKYNNMFKVINNDTQYQNIFTDDTNNSYYNSLEHNLWIKRNQIDERKKEEEEEQNKYYNVCMNNLYILRNERIPIFGKNFLDLIKKEFTKDKNIVYNYTNNVPIDYYSSVKEVWVEDICEKDNKKRKCKREKRWYKKIKKTNNPPEDSEVYRENSSDVEKYNCDVEKDNCDDEEKDNCDDEDMNSNLSSNVYGCIDISSQNFIHSRYHNPMMNMSYIIEFLFPNMEQFLKRHEKMIHNFTLINNPSVICKSHDIRINNNLLNYSNDKMNPIILQIKNATRVYHDAFLKQSIIFPLNKDISLGSGKLCALEKLLSKCKREGNKCLLFTQFIKMLDILEIFLNHLNYSFIRLDGSTKVEQRQKIVTKFNNDKSIFIFISSTRSGSIGINLTAANVVIFYDTDWNPSIDKQAMDRCHRIGQTKDVHVFRFVCEYTVEENIWKKQLQKRKLDNICINMGNFNNSNTHSKITDTDPTHNKDWFTNVDTIKEVFINKKNNDDDDDMYKDRLLHEQVENKDKMNVRFEKTLEHVEDKDDIRALNETKKETQNEISQNMQEFTTRNDFQDSYNLTSYCFNFLNENLTDSLKQQIDEMRMKIEIEMMNTGDENMSLSDLSNKSHNSE</sequence>
<protein>
    <recommendedName>
        <fullName>Probable ATP-dependent helicase PF08_0048</fullName>
        <ecNumber>3.6.4.-</ecNumber>
    </recommendedName>
</protein>
<accession>C0H4W3</accession>
<comment type="function">
    <text evidence="1">Catalytic component of a chromatin remodeling complex.</text>
</comment>
<comment type="subunit">
    <text evidence="1">Component of a chromatin-remodeling complex.</text>
</comment>
<comment type="subcellular location">
    <subcellularLocation>
        <location evidence="5">Nucleus</location>
    </subcellularLocation>
</comment>
<comment type="biotechnology">
    <text evidence="7">Possible candidate for an effective malaria vaccine as determined by epitope response in sera.</text>
</comment>
<comment type="similarity">
    <text evidence="2">Belongs to the SNF2/RAD54 helicase family. SWR1 subfamily.</text>
</comment>
<feature type="chain" id="PRO_0000388752" description="Probable ATP-dependent helicase PF08_0048">
    <location>
        <begin position="1"/>
        <end position="2082"/>
    </location>
</feature>
<feature type="domain" description="HSA" evidence="5">
    <location>
        <begin position="66"/>
        <end position="138"/>
    </location>
</feature>
<feature type="domain" description="Helicase ATP-binding" evidence="3">
    <location>
        <begin position="674"/>
        <end position="839"/>
    </location>
</feature>
<feature type="domain" description="Helicase C-terminal" evidence="4">
    <location>
        <begin position="1772"/>
        <end position="1922"/>
    </location>
</feature>
<feature type="region of interest" description="Disordered" evidence="6">
    <location>
        <begin position="209"/>
        <end position="234"/>
    </location>
</feature>
<feature type="region of interest" description="Disordered" evidence="6">
    <location>
        <begin position="301"/>
        <end position="470"/>
    </location>
</feature>
<feature type="region of interest" description="Disordered" evidence="6">
    <location>
        <begin position="532"/>
        <end position="641"/>
    </location>
</feature>
<feature type="region of interest" description="Disordered" evidence="6">
    <location>
        <begin position="1199"/>
        <end position="1255"/>
    </location>
</feature>
<feature type="coiled-coil region" evidence="2">
    <location>
        <begin position="476"/>
        <end position="531"/>
    </location>
</feature>
<feature type="coiled-coil region" evidence="2">
    <location>
        <begin position="1972"/>
        <end position="2060"/>
    </location>
</feature>
<feature type="short sequence motif" description="DEAH box" evidence="2">
    <location>
        <begin position="790"/>
        <end position="793"/>
    </location>
</feature>
<feature type="compositionally biased region" description="Low complexity" evidence="6">
    <location>
        <begin position="209"/>
        <end position="221"/>
    </location>
</feature>
<feature type="compositionally biased region" description="Basic and acidic residues" evidence="6">
    <location>
        <begin position="419"/>
        <end position="448"/>
    </location>
</feature>
<feature type="compositionally biased region" description="Basic and acidic residues" evidence="6">
    <location>
        <begin position="455"/>
        <end position="465"/>
    </location>
</feature>
<feature type="compositionally biased region" description="Basic and acidic residues" evidence="6">
    <location>
        <begin position="536"/>
        <end position="545"/>
    </location>
</feature>
<feature type="compositionally biased region" description="Low complexity" evidence="6">
    <location>
        <begin position="579"/>
        <end position="598"/>
    </location>
</feature>
<feature type="compositionally biased region" description="Acidic residues" evidence="6">
    <location>
        <begin position="599"/>
        <end position="627"/>
    </location>
</feature>
<feature type="binding site" evidence="3">
    <location>
        <begin position="687"/>
        <end position="694"/>
    </location>
    <ligand>
        <name>ATP</name>
        <dbReference type="ChEBI" id="CHEBI:30616"/>
    </ligand>
</feature>
<gene>
    <name type="ORF">PF08_0048</name>
</gene>
<evidence type="ECO:0000250" key="1"/>
<evidence type="ECO:0000255" key="2"/>
<evidence type="ECO:0000255" key="3">
    <source>
        <dbReference type="PROSITE-ProRule" id="PRU00541"/>
    </source>
</evidence>
<evidence type="ECO:0000255" key="4">
    <source>
        <dbReference type="PROSITE-ProRule" id="PRU00542"/>
    </source>
</evidence>
<evidence type="ECO:0000255" key="5">
    <source>
        <dbReference type="PROSITE-ProRule" id="PRU00549"/>
    </source>
</evidence>
<evidence type="ECO:0000256" key="6">
    <source>
        <dbReference type="SAM" id="MobiDB-lite"/>
    </source>
</evidence>
<evidence type="ECO:0000269" key="7">
    <source>
    </source>
</evidence>
<evidence type="ECO:0000305" key="8"/>
<name>HEPF1_PLAF7</name>
<organism>
    <name type="scientific">Plasmodium falciparum (isolate 3D7)</name>
    <dbReference type="NCBI Taxonomy" id="36329"/>
    <lineage>
        <taxon>Eukaryota</taxon>
        <taxon>Sar</taxon>
        <taxon>Alveolata</taxon>
        <taxon>Apicomplexa</taxon>
        <taxon>Aconoidasida</taxon>
        <taxon>Haemosporida</taxon>
        <taxon>Plasmodiidae</taxon>
        <taxon>Plasmodium</taxon>
        <taxon>Plasmodium (Laverania)</taxon>
    </lineage>
</organism>